<gene>
    <name type="primary">GDE1</name>
    <name type="ordered locus">AGR223W</name>
</gene>
<accession>Q74ZH9</accession>
<sequence length="1321" mass="147076">MKFGKTFPNHQVPEWAHKYVNYKGLKKQIKEITLVQDALFRQEQGAASQDGPARRRGRESKEQYLGHPEVKKLLAAFFFALDRDIEKVDGFYNMQFMEYDRRLRKLLSSAQLADITSVQRGATGYLHAPLPQYIAYGERERDGLPERYVPPHATDMSEDLAEVLTILLELRSHFRNLKWYGELNKRAFTKIMKKLDKKVGTNQQHSYFQARIKPLEFADDTPIVKALATINEILDRISPCVKDLQDKLRGEDRRLLQGSSSPIDVASQLVTKDDGAGLINELISMYRSVVLIPTRTLVTLLNKSALSRSFSCVDEILGIIPTLGDPSDINGRNFFHHHVIALGKKRTKSLEERDNINSLLSDSLDLEAAIPPEPNTRLVGAFGPDGVNSDDSPAPLSHILQQLPAHLRPSLLQRDNYKRTPLHYSAQYGLCEVTRIILQALSEWDAWNADVAIDDIDVWGDSENLTPLHLAVIGTHPLTVSTLLSFMNPEKSLNSPRLLHLATRLNSPSLLNSLLSAKGFDIDYQEPENLETALYVACKLDIYEAAEYLVKQGANMELGEKLFGWTPIFAAATEGYARIVQLLVDHGAKYDLFDESGWTPMEHAALRGHLDISQLIRITDNKAITRPKFATDWNKSTRPTETTNGLLSALTPSESGSTTTGSENKSSSLTPSTSNEMYALPARSSTSIDKISEPNKGNHRKVLKSQLSHGKVQTIKDTQLPQQPIKSFGHSFLQKDESVILLTLGTNDNRSTIPAVSLNKVPVAKASSTELDTALSLLVTCMDNLDAEPVMLDLPLHENLDSVTFKVPYKKDSSYTIFFDIVPTYGYSMANMNRENSSGMHSNVGNSTGPAYLDAQVGQCGSRLHYDQLGRDTPNTYDQRSRHQASQQKEQIATKKQSKILGRAVALLDSAPTSVGPNRRSIAEAITIPIIGSDTLEVLGIIRFDFLVVTPFVHKNLSVGPAETYWKSLVSTRVIGHRGLGKNMNTNKSLQLGENTVESFIAAASLGASYVEFDVQLTKDNIPVVYHDFLVAESGVDIPMHELTLEQFLDLNGERQRHQDAREAHRNHRSPNGRRLSMDDSSAELIKRSLMMRGDEDRTARDLNTIYGDRMRLTRTFKKNAFKANSRGHAIASSFVTLKELFKKIPQNVGFNIECKYPMVDEAEEEDIGPIAVEMNHWIDTVLEVVYDNVEGRDVIFSSFQPDVCLMLSLKQPSFPILFLTEGGTAKRCDIRAASLQNAIRFAHRWNLLGIVSAAAPIVIAPRLAQIVKSSGLVCVTYGVENNDPEIARVEMDAGVDAVIVDSVLAVRKGLTREAQDADTL</sequence>
<evidence type="ECO:0000250" key="1">
    <source>
        <dbReference type="UniProtKB" id="Q02979"/>
    </source>
</evidence>
<evidence type="ECO:0000255" key="2">
    <source>
        <dbReference type="PROSITE-ProRule" id="PRU00714"/>
    </source>
</evidence>
<evidence type="ECO:0000256" key="3">
    <source>
        <dbReference type="SAM" id="MobiDB-lite"/>
    </source>
</evidence>
<evidence type="ECO:0000305" key="4"/>
<dbReference type="EC" id="3.1.4.2" evidence="1"/>
<dbReference type="EMBL" id="AE016820">
    <property type="protein sequence ID" value="AAS54713.2"/>
    <property type="molecule type" value="Genomic_DNA"/>
</dbReference>
<dbReference type="RefSeq" id="NP_986889.2">
    <property type="nucleotide sequence ID" value="NM_211951.2"/>
</dbReference>
<dbReference type="SMR" id="Q74ZH9"/>
<dbReference type="FunCoup" id="Q74ZH9">
    <property type="interactions" value="192"/>
</dbReference>
<dbReference type="STRING" id="284811.Q74ZH9"/>
<dbReference type="EnsemblFungi" id="AAS54713">
    <property type="protein sequence ID" value="AAS54713"/>
    <property type="gene ID" value="AGOS_AGR223W"/>
</dbReference>
<dbReference type="GeneID" id="4623191"/>
<dbReference type="KEGG" id="ago:AGOS_AGR223W"/>
<dbReference type="eggNOG" id="KOG0504">
    <property type="taxonomic scope" value="Eukaryota"/>
</dbReference>
<dbReference type="eggNOG" id="KOG1162">
    <property type="taxonomic scope" value="Eukaryota"/>
</dbReference>
<dbReference type="eggNOG" id="KOG2421">
    <property type="taxonomic scope" value="Eukaryota"/>
</dbReference>
<dbReference type="HOGENOM" id="CLU_005444_1_0_1"/>
<dbReference type="InParanoid" id="Q74ZH9"/>
<dbReference type="OMA" id="WTPMEHA"/>
<dbReference type="OrthoDB" id="197419at2759"/>
<dbReference type="Proteomes" id="UP000000591">
    <property type="component" value="Chromosome VII"/>
</dbReference>
<dbReference type="GO" id="GO:0005737">
    <property type="term" value="C:cytoplasm"/>
    <property type="evidence" value="ECO:0007669"/>
    <property type="project" value="UniProtKB-SubCell"/>
</dbReference>
<dbReference type="GO" id="GO:0047389">
    <property type="term" value="F:glycerophosphocholine phosphodiesterase activity"/>
    <property type="evidence" value="ECO:0000318"/>
    <property type="project" value="GO_Central"/>
</dbReference>
<dbReference type="GO" id="GO:0046475">
    <property type="term" value="P:glycerophospholipid catabolic process"/>
    <property type="evidence" value="ECO:0000318"/>
    <property type="project" value="GO_Central"/>
</dbReference>
<dbReference type="CDD" id="cd14484">
    <property type="entry name" value="SPX_GDE1_like"/>
    <property type="match status" value="1"/>
</dbReference>
<dbReference type="Gene3D" id="1.25.40.20">
    <property type="entry name" value="Ankyrin repeat-containing domain"/>
    <property type="match status" value="1"/>
</dbReference>
<dbReference type="Gene3D" id="3.20.20.190">
    <property type="entry name" value="Phosphatidylinositol (PI) phosphodiesterase"/>
    <property type="match status" value="1"/>
</dbReference>
<dbReference type="InterPro" id="IPR002110">
    <property type="entry name" value="Ankyrin_rpt"/>
</dbReference>
<dbReference type="InterPro" id="IPR036770">
    <property type="entry name" value="Ankyrin_rpt-contain_sf"/>
</dbReference>
<dbReference type="InterPro" id="IPR051578">
    <property type="entry name" value="GDPD"/>
</dbReference>
<dbReference type="InterPro" id="IPR030395">
    <property type="entry name" value="GP_PDE_dom"/>
</dbReference>
<dbReference type="InterPro" id="IPR017946">
    <property type="entry name" value="PLC-like_Pdiesterase_TIM-brl"/>
</dbReference>
<dbReference type="InterPro" id="IPR004331">
    <property type="entry name" value="SPX_dom"/>
</dbReference>
<dbReference type="PANTHER" id="PTHR22958:SF1">
    <property type="entry name" value="GLYCEROPHOSPHOCHOLINE PHOSPHODIESTERASE GPCPD1"/>
    <property type="match status" value="1"/>
</dbReference>
<dbReference type="PANTHER" id="PTHR22958">
    <property type="entry name" value="GLYCEROPHOSPHORYL DIESTER PHOSPHODIESTERASE"/>
    <property type="match status" value="1"/>
</dbReference>
<dbReference type="Pfam" id="PF12796">
    <property type="entry name" value="Ank_2"/>
    <property type="match status" value="1"/>
</dbReference>
<dbReference type="Pfam" id="PF25329">
    <property type="entry name" value="C2_GDE1"/>
    <property type="match status" value="2"/>
</dbReference>
<dbReference type="Pfam" id="PF03009">
    <property type="entry name" value="GDPD"/>
    <property type="match status" value="1"/>
</dbReference>
<dbReference type="Pfam" id="PF03105">
    <property type="entry name" value="SPX"/>
    <property type="match status" value="2"/>
</dbReference>
<dbReference type="SMART" id="SM00248">
    <property type="entry name" value="ANK"/>
    <property type="match status" value="7"/>
</dbReference>
<dbReference type="SUPFAM" id="SSF48403">
    <property type="entry name" value="Ankyrin repeat"/>
    <property type="match status" value="1"/>
</dbReference>
<dbReference type="SUPFAM" id="SSF51695">
    <property type="entry name" value="PLC-like phosphodiesterases"/>
    <property type="match status" value="1"/>
</dbReference>
<dbReference type="PROSITE" id="PS50297">
    <property type="entry name" value="ANK_REP_REGION"/>
    <property type="match status" value="1"/>
</dbReference>
<dbReference type="PROSITE" id="PS50088">
    <property type="entry name" value="ANK_REPEAT"/>
    <property type="match status" value="1"/>
</dbReference>
<dbReference type="PROSITE" id="PS51704">
    <property type="entry name" value="GP_PDE"/>
    <property type="match status" value="1"/>
</dbReference>
<dbReference type="PROSITE" id="PS51382">
    <property type="entry name" value="SPX"/>
    <property type="match status" value="1"/>
</dbReference>
<reference key="1">
    <citation type="journal article" date="2004" name="Science">
        <title>The Ashbya gossypii genome as a tool for mapping the ancient Saccharomyces cerevisiae genome.</title>
        <authorList>
            <person name="Dietrich F.S."/>
            <person name="Voegeli S."/>
            <person name="Brachat S."/>
            <person name="Lerch A."/>
            <person name="Gates K."/>
            <person name="Steiner S."/>
            <person name="Mohr C."/>
            <person name="Poehlmann R."/>
            <person name="Luedi P."/>
            <person name="Choi S."/>
            <person name="Wing R.A."/>
            <person name="Flavier A."/>
            <person name="Gaffney T.D."/>
            <person name="Philippsen P."/>
        </authorList>
    </citation>
    <scope>NUCLEOTIDE SEQUENCE [LARGE SCALE GENOMIC DNA]</scope>
    <source>
        <strain>ATCC 10895 / CBS 109.51 / FGSC 9923 / NRRL Y-1056</strain>
    </source>
</reference>
<reference key="2">
    <citation type="journal article" date="2013" name="G3 (Bethesda)">
        <title>Genomes of Ashbya fungi isolated from insects reveal four mating-type loci, numerous translocations, lack of transposons, and distinct gene duplications.</title>
        <authorList>
            <person name="Dietrich F.S."/>
            <person name="Voegeli S."/>
            <person name="Kuo S."/>
            <person name="Philippsen P."/>
        </authorList>
    </citation>
    <scope>GENOME REANNOTATION</scope>
    <scope>SEQUENCE REVISION TO 327; 335 AND 340</scope>
    <source>
        <strain>ATCC 10895 / CBS 109.51 / FGSC 9923 / NRRL Y-1056</strain>
    </source>
</reference>
<name>GDE1_EREGS</name>
<protein>
    <recommendedName>
        <fullName>Glycerophosphocholine phosphodiesterase GDE1</fullName>
        <ecNumber evidence="1">3.1.4.2</ecNumber>
    </recommendedName>
    <alternativeName>
        <fullName>Glycerophosphodiester phosphodiesterase GDE1</fullName>
    </alternativeName>
</protein>
<keyword id="KW-0040">ANK repeat</keyword>
<keyword id="KW-0963">Cytoplasm</keyword>
<keyword id="KW-0378">Hydrolase</keyword>
<keyword id="KW-1185">Reference proteome</keyword>
<keyword id="KW-0677">Repeat</keyword>
<comment type="function">
    <text evidence="1">Glycerophosphocholine glycerophosphodiesterase responsible for the hydrolysis of intracellular glycerophosphocholine into glycerol-phosphate and choline. The choline is used for phosphatidyl-choline synthesis. Required for utilization of glycerophosphocholine as phosphate source.</text>
</comment>
<comment type="catalytic activity">
    <reaction evidence="1">
        <text>sn-glycerol 3-phosphocholine + H2O = sn-glycerol 3-phosphate + choline + H(+)</text>
        <dbReference type="Rhea" id="RHEA:16061"/>
        <dbReference type="ChEBI" id="CHEBI:15354"/>
        <dbReference type="ChEBI" id="CHEBI:15377"/>
        <dbReference type="ChEBI" id="CHEBI:15378"/>
        <dbReference type="ChEBI" id="CHEBI:16870"/>
        <dbReference type="ChEBI" id="CHEBI:57597"/>
        <dbReference type="EC" id="3.1.4.2"/>
    </reaction>
    <physiologicalReaction direction="left-to-right" evidence="1">
        <dbReference type="Rhea" id="RHEA:16062"/>
    </physiologicalReaction>
</comment>
<comment type="subcellular location">
    <subcellularLocation>
        <location evidence="1">Cytoplasm</location>
    </subcellularLocation>
</comment>
<comment type="similarity">
    <text evidence="4">Belongs to the GDE1 family.</text>
</comment>
<organism>
    <name type="scientific">Eremothecium gossypii (strain ATCC 10895 / CBS 109.51 / FGSC 9923 / NRRL Y-1056)</name>
    <name type="common">Yeast</name>
    <name type="synonym">Ashbya gossypii</name>
    <dbReference type="NCBI Taxonomy" id="284811"/>
    <lineage>
        <taxon>Eukaryota</taxon>
        <taxon>Fungi</taxon>
        <taxon>Dikarya</taxon>
        <taxon>Ascomycota</taxon>
        <taxon>Saccharomycotina</taxon>
        <taxon>Saccharomycetes</taxon>
        <taxon>Saccharomycetales</taxon>
        <taxon>Saccharomycetaceae</taxon>
        <taxon>Eremothecium</taxon>
    </lineage>
</organism>
<proteinExistence type="inferred from homology"/>
<feature type="chain" id="PRO_0000233008" description="Glycerophosphocholine phosphodiesterase GDE1">
    <location>
        <begin position="1"/>
        <end position="1321"/>
    </location>
</feature>
<feature type="domain" description="SPX" evidence="2">
    <location>
        <begin position="1"/>
        <end position="209"/>
    </location>
</feature>
<feature type="repeat" description="ANK 1">
    <location>
        <begin position="417"/>
        <end position="446"/>
    </location>
</feature>
<feature type="repeat" description="ANK 2">
    <location>
        <begin position="463"/>
        <end position="495"/>
    </location>
</feature>
<feature type="repeat" description="ANK 3">
    <location>
        <begin position="497"/>
        <end position="524"/>
    </location>
</feature>
<feature type="repeat" description="ANK 4">
    <location>
        <begin position="529"/>
        <end position="558"/>
    </location>
</feature>
<feature type="repeat" description="ANK 5">
    <location>
        <begin position="563"/>
        <end position="592"/>
    </location>
</feature>
<feature type="repeat" description="ANK 6">
    <location>
        <begin position="596"/>
        <end position="626"/>
    </location>
</feature>
<feature type="domain" description="GP-PDE">
    <location>
        <begin position="972"/>
        <end position="1311"/>
    </location>
</feature>
<feature type="region of interest" description="Disordered" evidence="3">
    <location>
        <begin position="630"/>
        <end position="698"/>
    </location>
</feature>
<feature type="region of interest" description="Disordered" evidence="3">
    <location>
        <begin position="868"/>
        <end position="893"/>
    </location>
</feature>
<feature type="region of interest" description="Disordered" evidence="3">
    <location>
        <begin position="1056"/>
        <end position="1079"/>
    </location>
</feature>
<feature type="compositionally biased region" description="Polar residues" evidence="3">
    <location>
        <begin position="633"/>
        <end position="646"/>
    </location>
</feature>
<feature type="compositionally biased region" description="Low complexity" evidence="3">
    <location>
        <begin position="651"/>
        <end position="668"/>
    </location>
</feature>
<feature type="compositionally biased region" description="Polar residues" evidence="3">
    <location>
        <begin position="873"/>
        <end position="893"/>
    </location>
</feature>